<gene>
    <name evidence="7" type="primary">Sgf29</name>
    <name type="synonym">Ccdc101</name>
</gene>
<feature type="chain" id="PRO_0000314027" description="SAGA-associated factor 29">
    <location>
        <begin position="1"/>
        <end position="293"/>
    </location>
</feature>
<feature type="domain" description="SGF29 C-terminal" evidence="4">
    <location>
        <begin position="152"/>
        <end position="293"/>
    </location>
</feature>
<feature type="region of interest" description="Histone H3K4me3 N-terminus binding" evidence="4">
    <location>
        <begin position="194"/>
        <end position="196"/>
    </location>
</feature>
<feature type="region of interest" description="Histone H3K4me3 N-terminus binding" evidence="4">
    <location>
        <begin position="240"/>
        <end position="243"/>
    </location>
</feature>
<feature type="region of interest" description="Histone H3K4me3 binding" evidence="4">
    <location>
        <begin position="264"/>
        <end position="266"/>
    </location>
</feature>
<feature type="coiled-coil region" evidence="3">
    <location>
        <begin position="3"/>
        <end position="88"/>
    </location>
</feature>
<feature type="site" description="Histone H3K4me3 binding" evidence="4">
    <location>
        <position position="238"/>
    </location>
</feature>
<feature type="site" description="Histone H3K4me3 binding" evidence="4">
    <location>
        <position position="245"/>
    </location>
</feature>
<feature type="modified residue" description="N6-acetyllysine" evidence="1">
    <location>
        <position position="288"/>
    </location>
</feature>
<proteinExistence type="evidence at protein level"/>
<reference key="1">
    <citation type="journal article" date="2004" name="Nature">
        <title>Genome sequence of the Brown Norway rat yields insights into mammalian evolution.</title>
        <authorList>
            <person name="Gibbs R.A."/>
            <person name="Weinstock G.M."/>
            <person name="Metzker M.L."/>
            <person name="Muzny D.M."/>
            <person name="Sodergren E.J."/>
            <person name="Scherer S."/>
            <person name="Scott G."/>
            <person name="Steffen D."/>
            <person name="Worley K.C."/>
            <person name="Burch P.E."/>
            <person name="Okwuonu G."/>
            <person name="Hines S."/>
            <person name="Lewis L."/>
            <person name="Deramo C."/>
            <person name="Delgado O."/>
            <person name="Dugan-Rocha S."/>
            <person name="Miner G."/>
            <person name="Morgan M."/>
            <person name="Hawes A."/>
            <person name="Gill R."/>
            <person name="Holt R.A."/>
            <person name="Adams M.D."/>
            <person name="Amanatides P.G."/>
            <person name="Baden-Tillson H."/>
            <person name="Barnstead M."/>
            <person name="Chin S."/>
            <person name="Evans C.A."/>
            <person name="Ferriera S."/>
            <person name="Fosler C."/>
            <person name="Glodek A."/>
            <person name="Gu Z."/>
            <person name="Jennings D."/>
            <person name="Kraft C.L."/>
            <person name="Nguyen T."/>
            <person name="Pfannkoch C.M."/>
            <person name="Sitter C."/>
            <person name="Sutton G.G."/>
            <person name="Venter J.C."/>
            <person name="Woodage T."/>
            <person name="Smith D."/>
            <person name="Lee H.-M."/>
            <person name="Gustafson E."/>
            <person name="Cahill P."/>
            <person name="Kana A."/>
            <person name="Doucette-Stamm L."/>
            <person name="Weinstock K."/>
            <person name="Fechtel K."/>
            <person name="Weiss R.B."/>
            <person name="Dunn D.M."/>
            <person name="Green E.D."/>
            <person name="Blakesley R.W."/>
            <person name="Bouffard G.G."/>
            <person name="De Jong P.J."/>
            <person name="Osoegawa K."/>
            <person name="Zhu B."/>
            <person name="Marra M."/>
            <person name="Schein J."/>
            <person name="Bosdet I."/>
            <person name="Fjell C."/>
            <person name="Jones S."/>
            <person name="Krzywinski M."/>
            <person name="Mathewson C."/>
            <person name="Siddiqui A."/>
            <person name="Wye N."/>
            <person name="McPherson J."/>
            <person name="Zhao S."/>
            <person name="Fraser C.M."/>
            <person name="Shetty J."/>
            <person name="Shatsman S."/>
            <person name="Geer K."/>
            <person name="Chen Y."/>
            <person name="Abramzon S."/>
            <person name="Nierman W.C."/>
            <person name="Havlak P.H."/>
            <person name="Chen R."/>
            <person name="Durbin K.J."/>
            <person name="Egan A."/>
            <person name="Ren Y."/>
            <person name="Song X.-Z."/>
            <person name="Li B."/>
            <person name="Liu Y."/>
            <person name="Qin X."/>
            <person name="Cawley S."/>
            <person name="Cooney A.J."/>
            <person name="D'Souza L.M."/>
            <person name="Martin K."/>
            <person name="Wu J.Q."/>
            <person name="Gonzalez-Garay M.L."/>
            <person name="Jackson A.R."/>
            <person name="Kalafus K.J."/>
            <person name="McLeod M.P."/>
            <person name="Milosavljevic A."/>
            <person name="Virk D."/>
            <person name="Volkov A."/>
            <person name="Wheeler D.A."/>
            <person name="Zhang Z."/>
            <person name="Bailey J.A."/>
            <person name="Eichler E.E."/>
            <person name="Tuzun E."/>
            <person name="Birney E."/>
            <person name="Mongin E."/>
            <person name="Ureta-Vidal A."/>
            <person name="Woodwark C."/>
            <person name="Zdobnov E."/>
            <person name="Bork P."/>
            <person name="Suyama M."/>
            <person name="Torrents D."/>
            <person name="Alexandersson M."/>
            <person name="Trask B.J."/>
            <person name="Young J.M."/>
            <person name="Huang H."/>
            <person name="Wang H."/>
            <person name="Xing H."/>
            <person name="Daniels S."/>
            <person name="Gietzen D."/>
            <person name="Schmidt J."/>
            <person name="Stevens K."/>
            <person name="Vitt U."/>
            <person name="Wingrove J."/>
            <person name="Camara F."/>
            <person name="Mar Alba M."/>
            <person name="Abril J.F."/>
            <person name="Guigo R."/>
            <person name="Smit A."/>
            <person name="Dubchak I."/>
            <person name="Rubin E.M."/>
            <person name="Couronne O."/>
            <person name="Poliakov A."/>
            <person name="Huebner N."/>
            <person name="Ganten D."/>
            <person name="Goesele C."/>
            <person name="Hummel O."/>
            <person name="Kreitler T."/>
            <person name="Lee Y.-A."/>
            <person name="Monti J."/>
            <person name="Schulz H."/>
            <person name="Zimdahl H."/>
            <person name="Himmelbauer H."/>
            <person name="Lehrach H."/>
            <person name="Jacob H.J."/>
            <person name="Bromberg S."/>
            <person name="Gullings-Handley J."/>
            <person name="Jensen-Seaman M.I."/>
            <person name="Kwitek A.E."/>
            <person name="Lazar J."/>
            <person name="Pasko D."/>
            <person name="Tonellato P.J."/>
            <person name="Twigger S."/>
            <person name="Ponting C.P."/>
            <person name="Duarte J.M."/>
            <person name="Rice S."/>
            <person name="Goodstadt L."/>
            <person name="Beatson S.A."/>
            <person name="Emes R.D."/>
            <person name="Winter E.E."/>
            <person name="Webber C."/>
            <person name="Brandt P."/>
            <person name="Nyakatura G."/>
            <person name="Adetobi M."/>
            <person name="Chiaromonte F."/>
            <person name="Elnitski L."/>
            <person name="Eswara P."/>
            <person name="Hardison R.C."/>
            <person name="Hou M."/>
            <person name="Kolbe D."/>
            <person name="Makova K."/>
            <person name="Miller W."/>
            <person name="Nekrutenko A."/>
            <person name="Riemer C."/>
            <person name="Schwartz S."/>
            <person name="Taylor J."/>
            <person name="Yang S."/>
            <person name="Zhang Y."/>
            <person name="Lindpaintner K."/>
            <person name="Andrews T.D."/>
            <person name="Caccamo M."/>
            <person name="Clamp M."/>
            <person name="Clarke L."/>
            <person name="Curwen V."/>
            <person name="Durbin R.M."/>
            <person name="Eyras E."/>
            <person name="Searle S.M."/>
            <person name="Cooper G.M."/>
            <person name="Batzoglou S."/>
            <person name="Brudno M."/>
            <person name="Sidow A."/>
            <person name="Stone E.A."/>
            <person name="Payseur B.A."/>
            <person name="Bourque G."/>
            <person name="Lopez-Otin C."/>
            <person name="Puente X.S."/>
            <person name="Chakrabarti K."/>
            <person name="Chatterji S."/>
            <person name="Dewey C."/>
            <person name="Pachter L."/>
            <person name="Bray N."/>
            <person name="Yap V.B."/>
            <person name="Caspi A."/>
            <person name="Tesler G."/>
            <person name="Pevzner P.A."/>
            <person name="Haussler D."/>
            <person name="Roskin K.M."/>
            <person name="Baertsch R."/>
            <person name="Clawson H."/>
            <person name="Furey T.S."/>
            <person name="Hinrichs A.S."/>
            <person name="Karolchik D."/>
            <person name="Kent W.J."/>
            <person name="Rosenbloom K.R."/>
            <person name="Trumbower H."/>
            <person name="Weirauch M."/>
            <person name="Cooper D.N."/>
            <person name="Stenson P.D."/>
            <person name="Ma B."/>
            <person name="Brent M."/>
            <person name="Arumugam M."/>
            <person name="Shteynberg D."/>
            <person name="Copley R.R."/>
            <person name="Taylor M.S."/>
            <person name="Riethman H."/>
            <person name="Mudunuri U."/>
            <person name="Peterson J."/>
            <person name="Guyer M."/>
            <person name="Felsenfeld A."/>
            <person name="Old S."/>
            <person name="Mockrin S."/>
            <person name="Collins F.S."/>
        </authorList>
    </citation>
    <scope>NUCLEOTIDE SEQUENCE [LARGE SCALE GENOMIC DNA]</scope>
    <source>
        <strain>Brown Norway</strain>
    </source>
</reference>
<reference key="2">
    <citation type="journal article" date="2007" name="Oncogene">
        <title>Deregulated expression of a novel component of TFTC/STAGA histone acetyltransferase complexes, rat SGF29, in hepatocellular carcinoma: possible implication for the oncogenic potential of c-Myc.</title>
        <authorList>
            <person name="Kurabe N."/>
            <person name="Katagiri K."/>
            <person name="Komiya Y."/>
            <person name="Ito R."/>
            <person name="Sugiyama A."/>
            <person name="Kawasaki Y."/>
            <person name="Tashiro F."/>
        </authorList>
    </citation>
    <scope>FUNCTION</scope>
    <scope>TISSUE SPECIFICITY</scope>
    <scope>SUBCELLULAR LOCATION</scope>
    <scope>INTERACTION WITH TADA3L; GCN5L2; SUPT3H AND MYC</scope>
</reference>
<dbReference type="EMBL" id="AABR03005493">
    <property type="status" value="NOT_ANNOTATED_CDS"/>
    <property type="molecule type" value="Genomic_DNA"/>
</dbReference>
<dbReference type="EMBL" id="AABR03001099">
    <property type="status" value="NOT_ANNOTATED_CDS"/>
    <property type="molecule type" value="Genomic_DNA"/>
</dbReference>
<dbReference type="RefSeq" id="NP_001385682.1">
    <property type="nucleotide sequence ID" value="NM_001398753.1"/>
</dbReference>
<dbReference type="RefSeq" id="NP_001385683.1">
    <property type="nucleotide sequence ID" value="NM_001398754.1"/>
</dbReference>
<dbReference type="RefSeq" id="XP_006230293.1">
    <property type="nucleotide sequence ID" value="XM_006230231.3"/>
</dbReference>
<dbReference type="RefSeq" id="XP_006230294.1">
    <property type="nucleotide sequence ID" value="XM_006230232.3"/>
</dbReference>
<dbReference type="RefSeq" id="XP_063142149.1">
    <property type="nucleotide sequence ID" value="XM_063286079.1"/>
</dbReference>
<dbReference type="SMR" id="P0C606"/>
<dbReference type="FunCoup" id="P0C606">
    <property type="interactions" value="1178"/>
</dbReference>
<dbReference type="STRING" id="10116.ENSRNOP00000026146"/>
<dbReference type="iPTMnet" id="P0C606"/>
<dbReference type="PhosphoSitePlus" id="P0C606"/>
<dbReference type="PaxDb" id="10116-ENSRNOP00000026146"/>
<dbReference type="GeneID" id="293488"/>
<dbReference type="UCSC" id="RGD:1310609">
    <property type="organism name" value="rat"/>
</dbReference>
<dbReference type="AGR" id="RGD:1310609"/>
<dbReference type="RGD" id="1310609">
    <property type="gene designation" value="Sgf29"/>
</dbReference>
<dbReference type="VEuPathDB" id="HostDB:ENSRNOG00000019245"/>
<dbReference type="eggNOG" id="KOG3038">
    <property type="taxonomic scope" value="Eukaryota"/>
</dbReference>
<dbReference type="HOGENOM" id="CLU_056816_0_0_1"/>
<dbReference type="InParanoid" id="P0C606"/>
<dbReference type="PhylomeDB" id="P0C606"/>
<dbReference type="TreeFam" id="TF314958"/>
<dbReference type="Reactome" id="R-RNO-9772755">
    <property type="pathway name" value="Formation of WDR5-containing histone-modifying complexes"/>
</dbReference>
<dbReference type="PRO" id="PR:P0C606"/>
<dbReference type="Proteomes" id="UP000002494">
    <property type="component" value="Chromosome 1"/>
</dbReference>
<dbReference type="Bgee" id="ENSRNOG00000019245">
    <property type="expression patterns" value="Expressed in testis and 20 other cell types or tissues"/>
</dbReference>
<dbReference type="ExpressionAtlas" id="P0C606">
    <property type="expression patterns" value="baseline and differential"/>
</dbReference>
<dbReference type="GO" id="GO:0140672">
    <property type="term" value="C:ATAC complex"/>
    <property type="evidence" value="ECO:0000250"/>
    <property type="project" value="UniProtKB"/>
</dbReference>
<dbReference type="GO" id="GO:0005634">
    <property type="term" value="C:nucleus"/>
    <property type="evidence" value="ECO:0007669"/>
    <property type="project" value="UniProtKB-SubCell"/>
</dbReference>
<dbReference type="GO" id="GO:0000124">
    <property type="term" value="C:SAGA complex"/>
    <property type="evidence" value="ECO:0000318"/>
    <property type="project" value="GO_Central"/>
</dbReference>
<dbReference type="GO" id="GO:0070461">
    <property type="term" value="C:SAGA-type complex"/>
    <property type="evidence" value="ECO:0000250"/>
    <property type="project" value="UniProtKB"/>
</dbReference>
<dbReference type="GO" id="GO:0140003">
    <property type="term" value="F:histone H3K36me3 reader activity"/>
    <property type="evidence" value="ECO:0000250"/>
    <property type="project" value="UniProtKB"/>
</dbReference>
<dbReference type="GO" id="GO:0035064">
    <property type="term" value="F:methylated histone binding"/>
    <property type="evidence" value="ECO:0000266"/>
    <property type="project" value="RGD"/>
</dbReference>
<dbReference type="GO" id="GO:0140034">
    <property type="term" value="F:methylation-dependent protein binding"/>
    <property type="evidence" value="ECO:0000250"/>
    <property type="project" value="UniProtKB"/>
</dbReference>
<dbReference type="GO" id="GO:0000122">
    <property type="term" value="P:negative regulation of transcription by RNA polymerase II"/>
    <property type="evidence" value="ECO:0000266"/>
    <property type="project" value="RGD"/>
</dbReference>
<dbReference type="GO" id="GO:0051726">
    <property type="term" value="P:regulation of cell cycle"/>
    <property type="evidence" value="ECO:0000266"/>
    <property type="project" value="RGD"/>
</dbReference>
<dbReference type="GO" id="GO:0051302">
    <property type="term" value="P:regulation of cell division"/>
    <property type="evidence" value="ECO:0000266"/>
    <property type="project" value="RGD"/>
</dbReference>
<dbReference type="GO" id="GO:0006282">
    <property type="term" value="P:regulation of DNA repair"/>
    <property type="evidence" value="ECO:0000266"/>
    <property type="project" value="RGD"/>
</dbReference>
<dbReference type="GO" id="GO:0006355">
    <property type="term" value="P:regulation of DNA-templated transcription"/>
    <property type="evidence" value="ECO:0000266"/>
    <property type="project" value="RGD"/>
</dbReference>
<dbReference type="GO" id="GO:0045995">
    <property type="term" value="P:regulation of embryonic development"/>
    <property type="evidence" value="ECO:0000266"/>
    <property type="project" value="RGD"/>
</dbReference>
<dbReference type="GO" id="GO:0006357">
    <property type="term" value="P:regulation of transcription by RNA polymerase II"/>
    <property type="evidence" value="ECO:0000266"/>
    <property type="project" value="RGD"/>
</dbReference>
<dbReference type="GO" id="GO:0034976">
    <property type="term" value="P:response to endoplasmic reticulum stress"/>
    <property type="evidence" value="ECO:0000266"/>
    <property type="project" value="RGD"/>
</dbReference>
<dbReference type="GO" id="GO:0045815">
    <property type="term" value="P:transcription initiation-coupled chromatin remodeling"/>
    <property type="evidence" value="ECO:0000250"/>
    <property type="project" value="UniProtKB"/>
</dbReference>
<dbReference type="CDD" id="cd20393">
    <property type="entry name" value="Tudor_SGF29_rpt1"/>
    <property type="match status" value="1"/>
</dbReference>
<dbReference type="CDD" id="cd20394">
    <property type="entry name" value="Tudor_SGF29_rpt2"/>
    <property type="match status" value="1"/>
</dbReference>
<dbReference type="FunFam" id="2.30.30.140:FF:000026">
    <property type="entry name" value="SAGA-associated factor 29 homolog"/>
    <property type="match status" value="1"/>
</dbReference>
<dbReference type="FunFam" id="2.30.30.140:FF:000029">
    <property type="entry name" value="SAGA-associated factor 29 homolog"/>
    <property type="match status" value="1"/>
</dbReference>
<dbReference type="Gene3D" id="2.30.30.140">
    <property type="match status" value="2"/>
</dbReference>
<dbReference type="InterPro" id="IPR037802">
    <property type="entry name" value="SGF29"/>
</dbReference>
<dbReference type="InterPro" id="IPR010750">
    <property type="entry name" value="SGF29_tudor-like_dom"/>
</dbReference>
<dbReference type="InterPro" id="IPR047288">
    <property type="entry name" value="Tudor_SGF29_rpt1"/>
</dbReference>
<dbReference type="InterPro" id="IPR047287">
    <property type="entry name" value="Tudor_SGF29_rpt2"/>
</dbReference>
<dbReference type="PANTHER" id="PTHR21539">
    <property type="entry name" value="SAGA-ASSOCIATED FACTOR 29"/>
    <property type="match status" value="1"/>
</dbReference>
<dbReference type="PANTHER" id="PTHR21539:SF0">
    <property type="entry name" value="SAGA-ASSOCIATED FACTOR 29"/>
    <property type="match status" value="1"/>
</dbReference>
<dbReference type="Pfam" id="PF07039">
    <property type="entry name" value="SGF29_Tudor"/>
    <property type="match status" value="1"/>
</dbReference>
<dbReference type="PROSITE" id="PS51518">
    <property type="entry name" value="SGF29_C"/>
    <property type="match status" value="1"/>
</dbReference>
<name>SGF29_RAT</name>
<organism>
    <name type="scientific">Rattus norvegicus</name>
    <name type="common">Rat</name>
    <dbReference type="NCBI Taxonomy" id="10116"/>
    <lineage>
        <taxon>Eukaryota</taxon>
        <taxon>Metazoa</taxon>
        <taxon>Chordata</taxon>
        <taxon>Craniata</taxon>
        <taxon>Vertebrata</taxon>
        <taxon>Euteleostomi</taxon>
        <taxon>Mammalia</taxon>
        <taxon>Eutheria</taxon>
        <taxon>Euarchontoglires</taxon>
        <taxon>Glires</taxon>
        <taxon>Rodentia</taxon>
        <taxon>Myomorpha</taxon>
        <taxon>Muroidea</taxon>
        <taxon>Muridae</taxon>
        <taxon>Murinae</taxon>
        <taxon>Rattus</taxon>
    </lineage>
</organism>
<protein>
    <recommendedName>
        <fullName evidence="6">SAGA-associated factor 29</fullName>
        <shortName>rSGF29</shortName>
    </recommendedName>
    <alternativeName>
        <fullName>Coiled-coil domain-containing protein 101</fullName>
    </alternativeName>
    <alternativeName>
        <fullName evidence="7">SAGA complex-associated factor 29</fullName>
    </alternativeName>
</protein>
<evidence type="ECO:0000250" key="1">
    <source>
        <dbReference type="UniProtKB" id="Q96ES7"/>
    </source>
</evidence>
<evidence type="ECO:0000250" key="2">
    <source>
        <dbReference type="UniProtKB" id="Q9DA08"/>
    </source>
</evidence>
<evidence type="ECO:0000255" key="3"/>
<evidence type="ECO:0000255" key="4">
    <source>
        <dbReference type="PROSITE-ProRule" id="PRU00851"/>
    </source>
</evidence>
<evidence type="ECO:0000269" key="5">
    <source>
    </source>
</evidence>
<evidence type="ECO:0000305" key="6"/>
<evidence type="ECO:0000312" key="7">
    <source>
        <dbReference type="RGD" id="1310609"/>
    </source>
</evidence>
<accession>P0C606</accession>
<keyword id="KW-0007">Acetylation</keyword>
<keyword id="KW-0156">Chromatin regulator</keyword>
<keyword id="KW-0175">Coiled coil</keyword>
<keyword id="KW-0539">Nucleus</keyword>
<keyword id="KW-1185">Reference proteome</keyword>
<keyword id="KW-0804">Transcription</keyword>
<keyword id="KW-0805">Transcription regulation</keyword>
<sequence length="293" mass="33268">MALVSADSRIAELLTELHQLIKQTQEERSRSEHNLVNIQKTHERMQTENKISPYYRTKLRGLYTTAKADAEAECNILRKALDKIAEIKSLLEERRIAAKIAGLYNDSEPPRKTMRRGVLMTLLQQSAMTLPLWIGKPGDKPPPLCGAIPASGDYVAKPGDKVAARVKAVEGDEQWILAEVVSYSHATNKYEVDDIDEEGKERHTLSRRRIIPLPQWKANPETDPEALFQKEQLVLALYPQTTCFYRALIHTPPQRPQDDYSVLFEDTSYADGYSPPLNVAQRYVVACKEPKKK</sequence>
<comment type="function">
    <text evidence="1 2 5">Chromatin reader component of some histone acetyltransferase (HAT) SAGA-type complexes like the TFTC-HAT, ATAC or STAGA complexes (By similarity). SGF29 specifically recognizes and binds methylated 'Lys-4' of histone H3 (H3K4me), with a preference for trimethylated form (H3K4me3) (By similarity). In the SAGA-type complexes, SGF29 is required to recruit complexes to H3K4me (By similarity). Involved in the response to endoplasmic reticulum (ER) stress by recruiting the SAGA complex to H3K4me, thereby promoting histone H3 acetylation and cell survival (By similarity). Also binds non-histone proteins that are methylated on Lys residues: specifically recognizes and binds CGAS monomethylated on 'Lys-491' (By similarity). May be involved in MYC-mediated oncogenic transformation (PubMed:17334388).</text>
</comment>
<comment type="subunit">
    <text evidence="1 2 5">Interacts with dimethylated and trimethylated 'Lys-4' of histone H3 (H3K4me2 and H3K4me3), with a preference for the trimethylated form (H3K4me3) (By similarity). Component of some SAGA-type complexes. Component of the ADA2A-containing complex (ATAC), composed of KAT14, KAT2A, TADA2L, TADA3L, ZZ3, MBIP, WDR5, YEATS2, CCDC101 and DR1 (By similarity). Interacts with (methylated) CGAS (By similarity). Interacts with TADA3L, GCN5L2, SUPT3H and MYC (PubMed:17334388).</text>
</comment>
<comment type="subcellular location">
    <subcellularLocation>
        <location evidence="5">Nucleus</location>
    </subcellularLocation>
</comment>
<comment type="tissue specificity">
    <text evidence="5">Widely expressed with highest levels in testis. Highly expressed in hepatoma and other tumor cell lines.</text>
</comment>
<comment type="domain">
    <text evidence="4">The SGF29 C-terminal (also named tudor-like) domain mediates binding to methylated 'Lys-4' of histone H3 (H3K4me).</text>
</comment>
<comment type="similarity">
    <text evidence="4">Belongs to the SGF29 family.</text>
</comment>